<evidence type="ECO:0000255" key="1">
    <source>
        <dbReference type="HAMAP-Rule" id="MF_03161"/>
    </source>
</evidence>
<evidence type="ECO:0000255" key="2">
    <source>
        <dbReference type="PROSITE-ProRule" id="PRU00236"/>
    </source>
</evidence>
<organism>
    <name type="scientific">Leishmania major</name>
    <dbReference type="NCBI Taxonomy" id="5664"/>
    <lineage>
        <taxon>Eukaryota</taxon>
        <taxon>Discoba</taxon>
        <taxon>Euglenozoa</taxon>
        <taxon>Kinetoplastea</taxon>
        <taxon>Metakinetoplastina</taxon>
        <taxon>Trypanosomatida</taxon>
        <taxon>Trypanosomatidae</taxon>
        <taxon>Leishmaniinae</taxon>
        <taxon>Leishmania</taxon>
    </lineage>
</organism>
<gene>
    <name type="primary">SIR2rp2</name>
    <name type="ORF">LMJF_23_1210</name>
</gene>
<comment type="function">
    <text evidence="1">NAD-dependent protein deacylase. Catalyzes the NAD-dependent hydrolysis of acyl groups from lysine residues.</text>
</comment>
<comment type="catalytic activity">
    <reaction evidence="1">
        <text>N(6)-acetyl-L-lysyl-[protein] + NAD(+) + H2O = 2''-O-acetyl-ADP-D-ribose + nicotinamide + L-lysyl-[protein]</text>
        <dbReference type="Rhea" id="RHEA:43636"/>
        <dbReference type="Rhea" id="RHEA-COMP:9752"/>
        <dbReference type="Rhea" id="RHEA-COMP:10731"/>
        <dbReference type="ChEBI" id="CHEBI:15377"/>
        <dbReference type="ChEBI" id="CHEBI:17154"/>
        <dbReference type="ChEBI" id="CHEBI:29969"/>
        <dbReference type="ChEBI" id="CHEBI:57540"/>
        <dbReference type="ChEBI" id="CHEBI:61930"/>
        <dbReference type="ChEBI" id="CHEBI:83767"/>
        <dbReference type="EC" id="2.3.1.286"/>
    </reaction>
</comment>
<comment type="cofactor">
    <cofactor evidence="1">
        <name>Zn(2+)</name>
        <dbReference type="ChEBI" id="CHEBI:29105"/>
    </cofactor>
    <text evidence="1">Binds 1 zinc ion per subunit.</text>
</comment>
<comment type="subcellular location">
    <subcellularLocation>
        <location evidence="1">Mitochondrion matrix</location>
    </subcellularLocation>
</comment>
<comment type="similarity">
    <text evidence="1">Belongs to the sirtuin family. Class II subfamily.</text>
</comment>
<feature type="transit peptide" description="Mitochondrion" evidence="1">
    <location>
        <begin position="1"/>
        <end position="22"/>
    </location>
</feature>
<feature type="chain" id="PRO_0000417349" description="NAD-dependent protein deacylase SIR2rp2">
    <location>
        <begin position="23"/>
        <end position="320"/>
    </location>
</feature>
<feature type="domain" description="Deacetylase sirtuin-type" evidence="2">
    <location>
        <begin position="23"/>
        <end position="320"/>
    </location>
</feature>
<feature type="active site" description="Proton acceptor" evidence="2">
    <location>
        <position position="144"/>
    </location>
</feature>
<feature type="binding site" evidence="1">
    <location>
        <begin position="28"/>
        <end position="48"/>
    </location>
    <ligand>
        <name>NAD(+)</name>
        <dbReference type="ChEBI" id="CHEBI:57540"/>
    </ligand>
</feature>
<feature type="binding site" evidence="1">
    <location>
        <begin position="108"/>
        <end position="111"/>
    </location>
    <ligand>
        <name>NAD(+)</name>
        <dbReference type="ChEBI" id="CHEBI:57540"/>
    </ligand>
</feature>
<feature type="binding site" evidence="1">
    <location>
        <position position="152"/>
    </location>
    <ligand>
        <name>Zn(2+)</name>
        <dbReference type="ChEBI" id="CHEBI:29105"/>
    </ligand>
</feature>
<feature type="binding site" evidence="1">
    <location>
        <position position="155"/>
    </location>
    <ligand>
        <name>Zn(2+)</name>
        <dbReference type="ChEBI" id="CHEBI:29105"/>
    </ligand>
</feature>
<feature type="binding site" evidence="1">
    <location>
        <position position="207"/>
    </location>
    <ligand>
        <name>Zn(2+)</name>
        <dbReference type="ChEBI" id="CHEBI:29105"/>
    </ligand>
</feature>
<feature type="binding site" evidence="1">
    <location>
        <position position="210"/>
    </location>
    <ligand>
        <name>Zn(2+)</name>
        <dbReference type="ChEBI" id="CHEBI:29105"/>
    </ligand>
</feature>
<feature type="binding site" evidence="1">
    <location>
        <begin position="248"/>
        <end position="250"/>
    </location>
    <ligand>
        <name>NAD(+)</name>
        <dbReference type="ChEBI" id="CHEBI:57540"/>
    </ligand>
</feature>
<feature type="binding site" evidence="1">
    <location>
        <begin position="274"/>
        <end position="276"/>
    </location>
    <ligand>
        <name>NAD(+)</name>
        <dbReference type="ChEBI" id="CHEBI:57540"/>
    </ligand>
</feature>
<feature type="binding site" evidence="1">
    <location>
        <position position="294"/>
    </location>
    <ligand>
        <name>NAD(+)</name>
        <dbReference type="ChEBI" id="CHEBI:57540"/>
    </ligand>
</feature>
<sequence length="320" mass="35248">MRPAGTLASFLERCSARKRGRGCVVLTGAGCSTESGIPDYRGPNGQYHRADFVLLTFQKFMRDDNEKRRYWARSMLGYSTMCGASCNAAHMALQAFTKSGAVAHILTQNVDGLHHLATYGGVGDAEEEHYYKYTTSDAPLKELHGNIHNVICTSCGFFMPRARLQRELRERNPGFYEQYGADVSRTRPDGDYSAPTEAVNAMHLVMCPRCNGFFKPHVVLFGENVPKPIVEATMSLVRDKASCLLCLGTSLQVYSAYRYVLQANQLGIPVAIVNAGTTRGDAIADLKLDVESVGSVLAETAHEMLGVPASMFFRRKTIQL</sequence>
<accession>Q4QB33</accession>
<dbReference type="EC" id="2.3.1.286" evidence="1 2"/>
<dbReference type="EMBL" id="FR796419">
    <property type="protein sequence ID" value="CAJ04804.1"/>
    <property type="molecule type" value="Genomic_DNA"/>
</dbReference>
<dbReference type="RefSeq" id="XP_001683465.1">
    <property type="nucleotide sequence ID" value="XM_001683413.1"/>
</dbReference>
<dbReference type="SMR" id="Q4QB33"/>
<dbReference type="STRING" id="5664.Q4QB33"/>
<dbReference type="EnsemblProtists" id="CAJ04804">
    <property type="protein sequence ID" value="CAJ04804"/>
    <property type="gene ID" value="LMJF_23_1210"/>
</dbReference>
<dbReference type="GeneID" id="5652114"/>
<dbReference type="KEGG" id="lma:LMJF_23_1210"/>
<dbReference type="VEuPathDB" id="TriTrypDB:LmjF.23.1210"/>
<dbReference type="VEuPathDB" id="TriTrypDB:LMJFC_230022600"/>
<dbReference type="VEuPathDB" id="TriTrypDB:LMJLV39_230021800"/>
<dbReference type="VEuPathDB" id="TriTrypDB:LMJSD75_230022200"/>
<dbReference type="eggNOG" id="KOG2683">
    <property type="taxonomic scope" value="Eukaryota"/>
</dbReference>
<dbReference type="HOGENOM" id="CLU_023643_3_2_1"/>
<dbReference type="InParanoid" id="Q4QB33"/>
<dbReference type="OMA" id="RRHYWAR"/>
<dbReference type="Proteomes" id="UP000000542">
    <property type="component" value="Chromosome 23"/>
</dbReference>
<dbReference type="GO" id="GO:0005759">
    <property type="term" value="C:mitochondrial matrix"/>
    <property type="evidence" value="ECO:0007669"/>
    <property type="project" value="UniProtKB-SubCell"/>
</dbReference>
<dbReference type="GO" id="GO:0017136">
    <property type="term" value="F:histone deacetylase activity, NAD-dependent"/>
    <property type="evidence" value="ECO:0000318"/>
    <property type="project" value="GO_Central"/>
</dbReference>
<dbReference type="GO" id="GO:0070403">
    <property type="term" value="F:NAD+ binding"/>
    <property type="evidence" value="ECO:0000318"/>
    <property type="project" value="GO_Central"/>
</dbReference>
<dbReference type="GO" id="GO:0008270">
    <property type="term" value="F:zinc ion binding"/>
    <property type="evidence" value="ECO:0007669"/>
    <property type="project" value="UniProtKB-UniRule"/>
</dbReference>
<dbReference type="CDD" id="cd01409">
    <property type="entry name" value="SIRT4"/>
    <property type="match status" value="1"/>
</dbReference>
<dbReference type="Gene3D" id="3.30.1600.10">
    <property type="entry name" value="SIR2/SIRT2 'Small Domain"/>
    <property type="match status" value="1"/>
</dbReference>
<dbReference type="Gene3D" id="3.40.50.1220">
    <property type="entry name" value="TPP-binding domain"/>
    <property type="match status" value="1"/>
</dbReference>
<dbReference type="HAMAP" id="MF_01967">
    <property type="entry name" value="Sirtuin_ClassII"/>
    <property type="match status" value="1"/>
</dbReference>
<dbReference type="InterPro" id="IPR029035">
    <property type="entry name" value="DHS-like_NAD/FAD-binding_dom"/>
</dbReference>
<dbReference type="InterPro" id="IPR050134">
    <property type="entry name" value="NAD-dep_sirtuin_deacylases"/>
</dbReference>
<dbReference type="InterPro" id="IPR003000">
    <property type="entry name" value="Sirtuin"/>
</dbReference>
<dbReference type="InterPro" id="IPR026591">
    <property type="entry name" value="Sirtuin_cat_small_dom_sf"/>
</dbReference>
<dbReference type="InterPro" id="IPR026587">
    <property type="entry name" value="Sirtuin_class_II"/>
</dbReference>
<dbReference type="InterPro" id="IPR026590">
    <property type="entry name" value="Ssirtuin_cat_dom"/>
</dbReference>
<dbReference type="PANTHER" id="PTHR11085">
    <property type="entry name" value="NAD-DEPENDENT PROTEIN DEACYLASE SIRTUIN-5, MITOCHONDRIAL-RELATED"/>
    <property type="match status" value="1"/>
</dbReference>
<dbReference type="PANTHER" id="PTHR11085:SF10">
    <property type="entry name" value="NAD-DEPENDENT PROTEIN DEACYLASE SIRTUIN-5, MITOCHONDRIAL-RELATED"/>
    <property type="match status" value="1"/>
</dbReference>
<dbReference type="Pfam" id="PF02146">
    <property type="entry name" value="SIR2"/>
    <property type="match status" value="1"/>
</dbReference>
<dbReference type="SUPFAM" id="SSF52467">
    <property type="entry name" value="DHS-like NAD/FAD-binding domain"/>
    <property type="match status" value="1"/>
</dbReference>
<dbReference type="PROSITE" id="PS50305">
    <property type="entry name" value="SIRTUIN"/>
    <property type="match status" value="1"/>
</dbReference>
<proteinExistence type="inferred from homology"/>
<reference key="1">
    <citation type="journal article" date="2005" name="Science">
        <title>The genome of the kinetoplastid parasite, Leishmania major.</title>
        <authorList>
            <person name="Ivens A.C."/>
            <person name="Peacock C.S."/>
            <person name="Worthey E.A."/>
            <person name="Murphy L."/>
            <person name="Aggarwal G."/>
            <person name="Berriman M."/>
            <person name="Sisk E."/>
            <person name="Rajandream M.A."/>
            <person name="Adlem E."/>
            <person name="Aert R."/>
            <person name="Anupama A."/>
            <person name="Apostolou Z."/>
            <person name="Attipoe P."/>
            <person name="Bason N."/>
            <person name="Bauser C."/>
            <person name="Beck A."/>
            <person name="Beverley S.M."/>
            <person name="Bianchettin G."/>
            <person name="Borzym K."/>
            <person name="Bothe G."/>
            <person name="Bruschi C.V."/>
            <person name="Collins M."/>
            <person name="Cadag E."/>
            <person name="Ciarloni L."/>
            <person name="Clayton C."/>
            <person name="Coulson R.M.R."/>
            <person name="Cronin A."/>
            <person name="Cruz A.K."/>
            <person name="Davies R.M."/>
            <person name="De Gaudenzi J."/>
            <person name="Dobson D.E."/>
            <person name="Duesterhoeft A."/>
            <person name="Fazelina G."/>
            <person name="Fosker N."/>
            <person name="Frasch A.C."/>
            <person name="Fraser A."/>
            <person name="Fuchs M."/>
            <person name="Gabel C."/>
            <person name="Goble A."/>
            <person name="Goffeau A."/>
            <person name="Harris D."/>
            <person name="Hertz-Fowler C."/>
            <person name="Hilbert H."/>
            <person name="Horn D."/>
            <person name="Huang Y."/>
            <person name="Klages S."/>
            <person name="Knights A."/>
            <person name="Kube M."/>
            <person name="Larke N."/>
            <person name="Litvin L."/>
            <person name="Lord A."/>
            <person name="Louie T."/>
            <person name="Marra M."/>
            <person name="Masuy D."/>
            <person name="Matthews K."/>
            <person name="Michaeli S."/>
            <person name="Mottram J.C."/>
            <person name="Mueller-Auer S."/>
            <person name="Munden H."/>
            <person name="Nelson S."/>
            <person name="Norbertczak H."/>
            <person name="Oliver K."/>
            <person name="O'neil S."/>
            <person name="Pentony M."/>
            <person name="Pohl T.M."/>
            <person name="Price C."/>
            <person name="Purnelle B."/>
            <person name="Quail M.A."/>
            <person name="Rabbinowitsch E."/>
            <person name="Reinhardt R."/>
            <person name="Rieger M."/>
            <person name="Rinta J."/>
            <person name="Robben J."/>
            <person name="Robertson L."/>
            <person name="Ruiz J.C."/>
            <person name="Rutter S."/>
            <person name="Saunders D."/>
            <person name="Schaefer M."/>
            <person name="Schein J."/>
            <person name="Schwartz D.C."/>
            <person name="Seeger K."/>
            <person name="Seyler A."/>
            <person name="Sharp S."/>
            <person name="Shin H."/>
            <person name="Sivam D."/>
            <person name="Squares R."/>
            <person name="Squares S."/>
            <person name="Tosato V."/>
            <person name="Vogt C."/>
            <person name="Volckaert G."/>
            <person name="Wambutt R."/>
            <person name="Warren T."/>
            <person name="Wedler H."/>
            <person name="Woodward J."/>
            <person name="Zhou S."/>
            <person name="Zimmermann W."/>
            <person name="Smith D.F."/>
            <person name="Blackwell J.M."/>
            <person name="Stuart K.D."/>
            <person name="Barrell B.G."/>
            <person name="Myler P.J."/>
        </authorList>
    </citation>
    <scope>NUCLEOTIDE SEQUENCE [LARGE SCALE GENOMIC DNA]</scope>
    <source>
        <strain>MHOM/IL/81/Friedlin</strain>
    </source>
</reference>
<keyword id="KW-0479">Metal-binding</keyword>
<keyword id="KW-0496">Mitochondrion</keyword>
<keyword id="KW-0520">NAD</keyword>
<keyword id="KW-1185">Reference proteome</keyword>
<keyword id="KW-0808">Transferase</keyword>
<keyword id="KW-0809">Transit peptide</keyword>
<keyword id="KW-0862">Zinc</keyword>
<name>SIR4_LEIMA</name>
<protein>
    <recommendedName>
        <fullName evidence="1">NAD-dependent protein deacylase SIR2rp2</fullName>
        <ecNumber evidence="1 2">2.3.1.286</ecNumber>
    </recommendedName>
    <alternativeName>
        <fullName evidence="1">Regulatory protein SIR2 homolog 2</fullName>
    </alternativeName>
    <alternativeName>
        <fullName>SIR2-related protein 2</fullName>
    </alternativeName>
</protein>